<accession>P37230</accession>
<feature type="chain" id="PRO_0000053484" description="Peroxisome proliferator-activated receptor alpha">
    <location>
        <begin position="1"/>
        <end position="468"/>
    </location>
</feature>
<feature type="domain" description="NR LBD" evidence="5">
    <location>
        <begin position="239"/>
        <end position="466"/>
    </location>
</feature>
<feature type="DNA-binding region" description="Nuclear receptor" evidence="4">
    <location>
        <begin position="99"/>
        <end position="173"/>
    </location>
</feature>
<feature type="zinc finger region" description="NR C4-type" evidence="4">
    <location>
        <begin position="102"/>
        <end position="122"/>
    </location>
</feature>
<feature type="zinc finger region" description="NR C4-type" evidence="4">
    <location>
        <begin position="139"/>
        <end position="161"/>
    </location>
</feature>
<feature type="region of interest" description="Required for heterodimerization with RXRA" evidence="1">
    <location>
        <begin position="304"/>
        <end position="433"/>
    </location>
</feature>
<feature type="site" description="Essential for heterodimerization with RXRA" evidence="1">
    <location>
        <position position="433"/>
    </location>
</feature>
<organism>
    <name type="scientific">Rattus norvegicus</name>
    <name type="common">Rat</name>
    <dbReference type="NCBI Taxonomy" id="10116"/>
    <lineage>
        <taxon>Eukaryota</taxon>
        <taxon>Metazoa</taxon>
        <taxon>Chordata</taxon>
        <taxon>Craniata</taxon>
        <taxon>Vertebrata</taxon>
        <taxon>Euteleostomi</taxon>
        <taxon>Mammalia</taxon>
        <taxon>Eutheria</taxon>
        <taxon>Euarchontoglires</taxon>
        <taxon>Glires</taxon>
        <taxon>Rodentia</taxon>
        <taxon>Myomorpha</taxon>
        <taxon>Muroidea</taxon>
        <taxon>Muridae</taxon>
        <taxon>Murinae</taxon>
        <taxon>Rattus</taxon>
    </lineage>
</organism>
<comment type="function">
    <text evidence="1">Ligand-activated transcription factor. Key regulator of lipid metabolism. Activated by the endogenous ligand 1-palmitoyl-2-oleoyl-sn-glycerol-3-phosphocholine (16:0/18:1-GPC). Activated by oleylethanolamide, a naturally occurring lipid that regulates satiety. Receptor for peroxisome proliferators such as hypolipidemic drugs and fatty acids. Regulates the peroxisomal beta-oxidation pathway of fatty acids. Functions as a transcription activator for the ACOX1 and P450 genes. Transactivation activity requires heterodimerization with RXRA and is antagonized by NR2C2. May be required for the propagation of clock information to metabolic pathways regulated by PER2 (By similarity).</text>
</comment>
<comment type="subunit">
    <text evidence="2 3 6">Heterodimer; with RXRA. This heterodimerization is required for DNA binding and transactivation activity. Interacts with NCOA3 coactivator (By similarity). Interacts with CITED2; the interaction stimulates its transcriptional activity (PubMed:15051727). Also interacts with PPARBP in vitro. Interacts with AKAP13, LPIN1, PRDM16 and coactivator NCOA6. Interacts with ASXL1 and ASXL2. Interacts with PER2. Interacts with SIRT1; the interaction seems to be modulated by NAD(+) levels (By similarity). Interacts with CRY1 and CRY2 (By similarity). In hepatocytes, interacts with PAQR3 and HUWE1; the interactions promote PPARA poylubiquitination and HUWE1-mediated degradation (By similarity).</text>
</comment>
<comment type="interaction">
    <interactant intactId="EBI-15674997">
        <id>P37230</id>
    </interactant>
    <interactant intactId="EBI-397530">
        <id>P62161</id>
        <label>Calm3</label>
    </interactant>
    <organismsDiffer>false</organismsDiffer>
    <experiments>2</experiments>
</comment>
<comment type="subcellular location">
    <subcellularLocation>
        <location>Nucleus</location>
    </subcellularLocation>
</comment>
<comment type="tissue specificity">
    <text>Expressed predominantly in liver and kidney.</text>
</comment>
<comment type="PTM">
    <text evidence="7">Phosphorylated.</text>
</comment>
<comment type="PTM">
    <text evidence="2">Ubiquitinated by E3 ubiquitin-protein ligase HUWE1; leading to proteasomal degradation.</text>
</comment>
<comment type="similarity">
    <text evidence="8">Belongs to the nuclear hormone receptor family. NR1 subfamily.</text>
</comment>
<evidence type="ECO:0000250" key="1"/>
<evidence type="ECO:0000250" key="2">
    <source>
        <dbReference type="UniProtKB" id="P23204"/>
    </source>
</evidence>
<evidence type="ECO:0000250" key="3">
    <source>
        <dbReference type="UniProtKB" id="Q07869"/>
    </source>
</evidence>
<evidence type="ECO:0000255" key="4">
    <source>
        <dbReference type="PROSITE-ProRule" id="PRU00407"/>
    </source>
</evidence>
<evidence type="ECO:0000255" key="5">
    <source>
        <dbReference type="PROSITE-ProRule" id="PRU01189"/>
    </source>
</evidence>
<evidence type="ECO:0000269" key="6">
    <source>
    </source>
</evidence>
<evidence type="ECO:0000269" key="7">
    <source>
    </source>
</evidence>
<evidence type="ECO:0000305" key="8"/>
<gene>
    <name type="primary">Ppara</name>
    <name type="synonym">Nr1c1</name>
    <name type="synonym">Ppar</name>
</gene>
<keyword id="KW-0010">Activator</keyword>
<keyword id="KW-0090">Biological rhythms</keyword>
<keyword id="KW-0238">DNA-binding</keyword>
<keyword id="KW-0446">Lipid-binding</keyword>
<keyword id="KW-0479">Metal-binding</keyword>
<keyword id="KW-0539">Nucleus</keyword>
<keyword id="KW-0597">Phosphoprotein</keyword>
<keyword id="KW-0675">Receptor</keyword>
<keyword id="KW-1185">Reference proteome</keyword>
<keyword id="KW-0804">Transcription</keyword>
<keyword id="KW-0805">Transcription regulation</keyword>
<keyword id="KW-0832">Ubl conjugation</keyword>
<keyword id="KW-0862">Zinc</keyword>
<keyword id="KW-0863">Zinc-finger</keyword>
<sequence length="468" mass="52377">MVDTESPICPLSPLEADDLESPLSEEFLQEMGNIQEISQSLGEESSGSFSFADYQYLGSCPGSEGSVITDTLSPASSPSSVSCPAVPTSTDESPGNALNIECRICGDKASGYHYGVHACEGCKGFFRRTIRLKLAYDKCDRSCKIQKKNRNKCQYCRFHKCLSVGMSHNAIRFGRMPRSEKAKLKAEILTCEHDLKDSETADLKSLAKRIHEAYLKNFNMNKVKARVILAGKTSNNPPFVIHDMETLCMAEKTLVAKMVANGVENKEAEVRFFHCCQCMSVETVTELTEFAKAIPGFANLDLNDQVTLLKYGVYEAIFTMLSSLMNKDGMLIAYGNGFITREFLKNLRKPFCDIMEPKFDFAMKFNALELDDSDISLFVAAIICCGDRPGLLNIGYIEKLQEGIVHVLKLHLQSNHPDDTFLFPKLLQKMVDLRQLVTEHAQLVQVIKKTESDAALHPLLQEIYRDMY</sequence>
<name>PPARA_RAT</name>
<protein>
    <recommendedName>
        <fullName>Peroxisome proliferator-activated receptor alpha</fullName>
        <shortName>PPAR-alpha</shortName>
    </recommendedName>
    <alternativeName>
        <fullName>Nuclear receptor subfamily 1 group C member 1</fullName>
    </alternativeName>
</protein>
<proteinExistence type="evidence at protein level"/>
<reference key="1">
    <citation type="journal article" date="1992" name="Proc. Natl. Acad. Sci. U.S.A.">
        <title>Fatty acids activate a chimera of the clofibric acid-activated receptor and the glucocorticoid receptor.</title>
        <authorList>
            <person name="Goettlicher M."/>
            <person name="Widmark E."/>
            <person name="Li Q."/>
            <person name="Gustafsson J.-A."/>
        </authorList>
    </citation>
    <scope>NUCLEOTIDE SEQUENCE [MRNA]</scope>
</reference>
<reference key="2">
    <citation type="journal article" date="1996" name="Endocrinology">
        <title>The peroxisome proliferator-activated receptor alpha is a phosphoprotein: regulation by insulin.</title>
        <authorList>
            <person name="Shalev A."/>
            <person name="Siegrist-Kaiser C.A."/>
            <person name="Yen P.M."/>
            <person name="Wahli W."/>
            <person name="Burger A.G."/>
            <person name="Chin W.W."/>
            <person name="Meier C.A."/>
        </authorList>
    </citation>
    <scope>PHOSPHORYLATION</scope>
</reference>
<reference key="3">
    <citation type="journal article" date="2004" name="J. Biol. Chem.">
        <title>Identification of the CREB-binding protein/p300-interacting protein CITED2 as a peroxisome proliferator-activated receptor alpha coregulator.</title>
        <authorList>
            <person name="Tien E.S."/>
            <person name="Davis J.W."/>
            <person name="Vanden Heuvel J.P."/>
        </authorList>
    </citation>
    <scope>INTERACTION WITH CITED2</scope>
</reference>
<dbReference type="EMBL" id="M88592">
    <property type="protein sequence ID" value="AAA41918.1"/>
    <property type="molecule type" value="mRNA"/>
</dbReference>
<dbReference type="PIR" id="A45288">
    <property type="entry name" value="A45288"/>
</dbReference>
<dbReference type="RefSeq" id="NP_037328.1">
    <property type="nucleotide sequence ID" value="NM_013196.2"/>
</dbReference>
<dbReference type="RefSeq" id="XP_006242218.1">
    <property type="nucleotide sequence ID" value="XM_006242156.2"/>
</dbReference>
<dbReference type="RefSeq" id="XP_017450169.1">
    <property type="nucleotide sequence ID" value="XM_017594680.1"/>
</dbReference>
<dbReference type="RefSeq" id="XP_017450170.1">
    <property type="nucleotide sequence ID" value="XM_017594681.1"/>
</dbReference>
<dbReference type="RefSeq" id="XP_038934429.1">
    <property type="nucleotide sequence ID" value="XM_039078501.2"/>
</dbReference>
<dbReference type="SMR" id="P37230"/>
<dbReference type="BioGRID" id="247775">
    <property type="interactions" value="5"/>
</dbReference>
<dbReference type="CORUM" id="P37230"/>
<dbReference type="DIP" id="DIP-29529N"/>
<dbReference type="FunCoup" id="P37230">
    <property type="interactions" value="409"/>
</dbReference>
<dbReference type="IntAct" id="P37230">
    <property type="interactions" value="1"/>
</dbReference>
<dbReference type="STRING" id="10116.ENSRNOP00000038651"/>
<dbReference type="BindingDB" id="P37230"/>
<dbReference type="ChEMBL" id="CHEMBL2129"/>
<dbReference type="iPTMnet" id="P37230"/>
<dbReference type="PhosphoSitePlus" id="P37230"/>
<dbReference type="PaxDb" id="10116-ENSRNOP00000038651"/>
<dbReference type="Ensembl" id="ENSRNOT00000030082.3">
    <property type="protein sequence ID" value="ENSRNOP00000038651.1"/>
    <property type="gene ID" value="ENSRNOG00000021463.3"/>
</dbReference>
<dbReference type="GeneID" id="25747"/>
<dbReference type="KEGG" id="rno:25747"/>
<dbReference type="AGR" id="RGD:3369"/>
<dbReference type="CTD" id="5465"/>
<dbReference type="RGD" id="3369">
    <property type="gene designation" value="Ppara"/>
</dbReference>
<dbReference type="eggNOG" id="KOG3575">
    <property type="taxonomic scope" value="Eukaryota"/>
</dbReference>
<dbReference type="GeneTree" id="ENSGT00940000157097"/>
<dbReference type="HOGENOM" id="CLU_007368_4_1_1"/>
<dbReference type="InParanoid" id="P37230"/>
<dbReference type="OMA" id="TNHPDNI"/>
<dbReference type="PhylomeDB" id="P37230"/>
<dbReference type="TreeFam" id="TF316304"/>
<dbReference type="Reactome" id="R-RNO-383280">
    <property type="pathway name" value="Nuclear Receptor transcription pathway"/>
</dbReference>
<dbReference type="Reactome" id="R-RNO-400206">
    <property type="pathway name" value="Regulation of lipid metabolism by PPARalpha"/>
</dbReference>
<dbReference type="Reactome" id="R-RNO-4090294">
    <property type="pathway name" value="SUMOylation of intracellular receptors"/>
</dbReference>
<dbReference type="Reactome" id="R-RNO-9707564">
    <property type="pathway name" value="Cytoprotection by HMOX1"/>
</dbReference>
<dbReference type="PRO" id="PR:P37230"/>
<dbReference type="Proteomes" id="UP000002494">
    <property type="component" value="Chromosome 7"/>
</dbReference>
<dbReference type="Bgee" id="ENSRNOG00000021463">
    <property type="expression patterns" value="Expressed in liver and 18 other cell types or tissues"/>
</dbReference>
<dbReference type="GO" id="GO:0005634">
    <property type="term" value="C:nucleus"/>
    <property type="evidence" value="ECO:0000266"/>
    <property type="project" value="RGD"/>
</dbReference>
<dbReference type="GO" id="GO:0001216">
    <property type="term" value="F:DNA-binding transcription activator activity"/>
    <property type="evidence" value="ECO:0000266"/>
    <property type="project" value="RGD"/>
</dbReference>
<dbReference type="GO" id="GO:0001228">
    <property type="term" value="F:DNA-binding transcription activator activity, RNA polymerase II-specific"/>
    <property type="evidence" value="ECO:0000266"/>
    <property type="project" value="RGD"/>
</dbReference>
<dbReference type="GO" id="GO:0003700">
    <property type="term" value="F:DNA-binding transcription factor activity"/>
    <property type="evidence" value="ECO:0000266"/>
    <property type="project" value="RGD"/>
</dbReference>
<dbReference type="GO" id="GO:0140297">
    <property type="term" value="F:DNA-binding transcription factor binding"/>
    <property type="evidence" value="ECO:0000353"/>
    <property type="project" value="RGD"/>
</dbReference>
<dbReference type="GO" id="GO:0001227">
    <property type="term" value="F:DNA-binding transcription repressor activity, RNA polymerase II-specific"/>
    <property type="evidence" value="ECO:0000266"/>
    <property type="project" value="RGD"/>
</dbReference>
<dbReference type="GO" id="GO:0008289">
    <property type="term" value="F:lipid binding"/>
    <property type="evidence" value="ECO:0000250"/>
    <property type="project" value="UniProtKB"/>
</dbReference>
<dbReference type="GO" id="GO:0097371">
    <property type="term" value="F:MDM2/MDM4 family protein binding"/>
    <property type="evidence" value="ECO:0000353"/>
    <property type="project" value="RGD"/>
</dbReference>
<dbReference type="GO" id="GO:0031435">
    <property type="term" value="F:mitogen-activated protein kinase kinase kinase binding"/>
    <property type="evidence" value="ECO:0000353"/>
    <property type="project" value="RGD"/>
</dbReference>
<dbReference type="GO" id="GO:0051525">
    <property type="term" value="F:NFAT protein binding"/>
    <property type="evidence" value="ECO:0000353"/>
    <property type="project" value="RGD"/>
</dbReference>
<dbReference type="GO" id="GO:0004879">
    <property type="term" value="F:nuclear receptor activity"/>
    <property type="evidence" value="ECO:0000315"/>
    <property type="project" value="RGD"/>
</dbReference>
<dbReference type="GO" id="GO:0003707">
    <property type="term" value="F:nuclear steroid receptor activity"/>
    <property type="evidence" value="ECO:0000266"/>
    <property type="project" value="RGD"/>
</dbReference>
<dbReference type="GO" id="GO:0019902">
    <property type="term" value="F:phosphatase binding"/>
    <property type="evidence" value="ECO:0000353"/>
    <property type="project" value="RGD"/>
</dbReference>
<dbReference type="GO" id="GO:0019904">
    <property type="term" value="F:protein domain specific binding"/>
    <property type="evidence" value="ECO:0000314"/>
    <property type="project" value="RGD"/>
</dbReference>
<dbReference type="GO" id="GO:0044877">
    <property type="term" value="F:protein-containing complex binding"/>
    <property type="evidence" value="ECO:0000315"/>
    <property type="project" value="RGD"/>
</dbReference>
<dbReference type="GO" id="GO:0000978">
    <property type="term" value="F:RNA polymerase II cis-regulatory region sequence-specific DNA binding"/>
    <property type="evidence" value="ECO:0000266"/>
    <property type="project" value="RGD"/>
</dbReference>
<dbReference type="GO" id="GO:0061629">
    <property type="term" value="F:RNA polymerase II-specific DNA-binding transcription factor binding"/>
    <property type="evidence" value="ECO:0000266"/>
    <property type="project" value="RGD"/>
</dbReference>
<dbReference type="GO" id="GO:0043565">
    <property type="term" value="F:sequence-specific DNA binding"/>
    <property type="evidence" value="ECO:0000314"/>
    <property type="project" value="RGD"/>
</dbReference>
<dbReference type="GO" id="GO:0038023">
    <property type="term" value="F:signaling receptor activity"/>
    <property type="evidence" value="ECO:0000266"/>
    <property type="project" value="RGD"/>
</dbReference>
<dbReference type="GO" id="GO:0001223">
    <property type="term" value="F:transcription coactivator binding"/>
    <property type="evidence" value="ECO:0000353"/>
    <property type="project" value="RGD"/>
</dbReference>
<dbReference type="GO" id="GO:0031624">
    <property type="term" value="F:ubiquitin conjugating enzyme binding"/>
    <property type="evidence" value="ECO:0000266"/>
    <property type="project" value="RGD"/>
</dbReference>
<dbReference type="GO" id="GO:0008270">
    <property type="term" value="F:zinc ion binding"/>
    <property type="evidence" value="ECO:0007669"/>
    <property type="project" value="UniProtKB-KW"/>
</dbReference>
<dbReference type="GO" id="GO:0035095">
    <property type="term" value="P:behavioral response to nicotine"/>
    <property type="evidence" value="ECO:0000314"/>
    <property type="project" value="RGD"/>
</dbReference>
<dbReference type="GO" id="GO:0030154">
    <property type="term" value="P:cell differentiation"/>
    <property type="evidence" value="ECO:0000318"/>
    <property type="project" value="GO_Central"/>
</dbReference>
<dbReference type="GO" id="GO:0071332">
    <property type="term" value="P:cellular response to fructose stimulus"/>
    <property type="evidence" value="ECO:0000270"/>
    <property type="project" value="RGD"/>
</dbReference>
<dbReference type="GO" id="GO:0009267">
    <property type="term" value="P:cellular response to starvation"/>
    <property type="evidence" value="ECO:0000266"/>
    <property type="project" value="RGD"/>
</dbReference>
<dbReference type="GO" id="GO:0032922">
    <property type="term" value="P:circadian regulation of gene expression"/>
    <property type="evidence" value="ECO:0000250"/>
    <property type="project" value="UniProtKB"/>
</dbReference>
<dbReference type="GO" id="GO:0070166">
    <property type="term" value="P:enamel mineralization"/>
    <property type="evidence" value="ECO:0000266"/>
    <property type="project" value="RGD"/>
</dbReference>
<dbReference type="GO" id="GO:0008544">
    <property type="term" value="P:epidermis development"/>
    <property type="evidence" value="ECO:0000266"/>
    <property type="project" value="RGD"/>
</dbReference>
<dbReference type="GO" id="GO:0006631">
    <property type="term" value="P:fatty acid metabolic process"/>
    <property type="evidence" value="ECO:0000315"/>
    <property type="project" value="RGD"/>
</dbReference>
<dbReference type="GO" id="GO:0010467">
    <property type="term" value="P:gene expression"/>
    <property type="evidence" value="ECO:0000266"/>
    <property type="project" value="RGD"/>
</dbReference>
<dbReference type="GO" id="GO:0006094">
    <property type="term" value="P:gluconeogenesis"/>
    <property type="evidence" value="ECO:0000266"/>
    <property type="project" value="RGD"/>
</dbReference>
<dbReference type="GO" id="GO:0007507">
    <property type="term" value="P:heart development"/>
    <property type="evidence" value="ECO:0000270"/>
    <property type="project" value="RGD"/>
</dbReference>
<dbReference type="GO" id="GO:0009755">
    <property type="term" value="P:hormone-mediated signaling pathway"/>
    <property type="evidence" value="ECO:0000318"/>
    <property type="project" value="GO_Central"/>
</dbReference>
<dbReference type="GO" id="GO:0030522">
    <property type="term" value="P:intracellular receptor signaling pathway"/>
    <property type="evidence" value="ECO:0000318"/>
    <property type="project" value="GO_Central"/>
</dbReference>
<dbReference type="GO" id="GO:0007595">
    <property type="term" value="P:lactation"/>
    <property type="evidence" value="ECO:0000270"/>
    <property type="project" value="RGD"/>
</dbReference>
<dbReference type="GO" id="GO:0042157">
    <property type="term" value="P:lipoprotein metabolic process"/>
    <property type="evidence" value="ECO:0000315"/>
    <property type="project" value="RGD"/>
</dbReference>
<dbReference type="GO" id="GO:0032099">
    <property type="term" value="P:negative regulation of appetite"/>
    <property type="evidence" value="ECO:0000250"/>
    <property type="project" value="UniProtKB"/>
</dbReference>
<dbReference type="GO" id="GO:0045776">
    <property type="term" value="P:negative regulation of blood pressure"/>
    <property type="evidence" value="ECO:0000315"/>
    <property type="project" value="RGD"/>
</dbReference>
<dbReference type="GO" id="GO:0061052">
    <property type="term" value="P:negative regulation of cell growth involved in cardiac muscle cell development"/>
    <property type="evidence" value="ECO:0000315"/>
    <property type="project" value="RGD"/>
</dbReference>
<dbReference type="GO" id="GO:0010887">
    <property type="term" value="P:negative regulation of cholesterol storage"/>
    <property type="evidence" value="ECO:0000266"/>
    <property type="project" value="RGD"/>
</dbReference>
<dbReference type="GO" id="GO:1900016">
    <property type="term" value="P:negative regulation of cytokine production involved in inflammatory response"/>
    <property type="evidence" value="ECO:0000266"/>
    <property type="project" value="RGD"/>
</dbReference>
<dbReference type="GO" id="GO:0045820">
    <property type="term" value="P:negative regulation of glycolytic process"/>
    <property type="evidence" value="ECO:0000266"/>
    <property type="project" value="RGD"/>
</dbReference>
<dbReference type="GO" id="GO:1903944">
    <property type="term" value="P:negative regulation of hepatocyte apoptotic process"/>
    <property type="evidence" value="ECO:0000266"/>
    <property type="project" value="RGD"/>
</dbReference>
<dbReference type="GO" id="GO:0050728">
    <property type="term" value="P:negative regulation of inflammatory response"/>
    <property type="evidence" value="ECO:0000266"/>
    <property type="project" value="RGD"/>
</dbReference>
<dbReference type="GO" id="GO:1903038">
    <property type="term" value="P:negative regulation of leukocyte cell-cell adhesion"/>
    <property type="evidence" value="ECO:0000266"/>
    <property type="project" value="RGD"/>
</dbReference>
<dbReference type="GO" id="GO:0010745">
    <property type="term" value="P:negative regulation of macrophage derived foam cell differentiation"/>
    <property type="evidence" value="ECO:0000266"/>
    <property type="project" value="RGD"/>
</dbReference>
<dbReference type="GO" id="GO:1902894">
    <property type="term" value="P:negative regulation of miRNA transcription"/>
    <property type="evidence" value="ECO:0000266"/>
    <property type="project" value="RGD"/>
</dbReference>
<dbReference type="GO" id="GO:0051898">
    <property type="term" value="P:negative regulation of phosphatidylinositol 3-kinase/protein kinase B signal transduction"/>
    <property type="evidence" value="ECO:0000266"/>
    <property type="project" value="RGD"/>
</dbReference>
<dbReference type="GO" id="GO:1903427">
    <property type="term" value="P:negative regulation of reactive oxygen species biosynthetic process"/>
    <property type="evidence" value="ECO:0000266"/>
    <property type="project" value="RGD"/>
</dbReference>
<dbReference type="GO" id="GO:0000122">
    <property type="term" value="P:negative regulation of transcription by RNA polymerase II"/>
    <property type="evidence" value="ECO:0000266"/>
    <property type="project" value="RGD"/>
</dbReference>
<dbReference type="GO" id="GO:0030512">
    <property type="term" value="P:negative regulation of transforming growth factor beta receptor signaling pathway"/>
    <property type="evidence" value="ECO:0000266"/>
    <property type="project" value="RGD"/>
</dbReference>
<dbReference type="GO" id="GO:0046209">
    <property type="term" value="P:nitric oxide metabolic process"/>
    <property type="evidence" value="ECO:0000270"/>
    <property type="project" value="RGD"/>
</dbReference>
<dbReference type="GO" id="GO:0035357">
    <property type="term" value="P:peroxisome proliferator activated receptor signaling pathway"/>
    <property type="evidence" value="ECO:0000250"/>
    <property type="project" value="UniProtKB"/>
</dbReference>
<dbReference type="GO" id="GO:2001171">
    <property type="term" value="P:positive regulation of ATP biosynthetic process"/>
    <property type="evidence" value="ECO:0000266"/>
    <property type="project" value="RGD"/>
</dbReference>
<dbReference type="GO" id="GO:0045893">
    <property type="term" value="P:positive regulation of DNA-templated transcription"/>
    <property type="evidence" value="ECO:0000250"/>
    <property type="project" value="UniProtKB"/>
</dbReference>
<dbReference type="GO" id="GO:0045923">
    <property type="term" value="P:positive regulation of fatty acid metabolic process"/>
    <property type="evidence" value="ECO:0000318"/>
    <property type="project" value="GO_Central"/>
</dbReference>
<dbReference type="GO" id="GO:0046321">
    <property type="term" value="P:positive regulation of fatty acid oxidation"/>
    <property type="evidence" value="ECO:0000266"/>
    <property type="project" value="RGD"/>
</dbReference>
<dbReference type="GO" id="GO:0045722">
    <property type="term" value="P:positive regulation of gluconeogenesis"/>
    <property type="evidence" value="ECO:0000266"/>
    <property type="project" value="RGD"/>
</dbReference>
<dbReference type="GO" id="GO:0046889">
    <property type="term" value="P:positive regulation of lipid biosynthetic process"/>
    <property type="evidence" value="ECO:0000266"/>
    <property type="project" value="RGD"/>
</dbReference>
<dbReference type="GO" id="GO:0045944">
    <property type="term" value="P:positive regulation of transcription by RNA polymerase II"/>
    <property type="evidence" value="ECO:0000266"/>
    <property type="project" value="RGD"/>
</dbReference>
<dbReference type="GO" id="GO:1904189">
    <property type="term" value="P:positive regulation of transformation of host cell by virus"/>
    <property type="evidence" value="ECO:0007669"/>
    <property type="project" value="Ensembl"/>
</dbReference>
<dbReference type="GO" id="GO:0042752">
    <property type="term" value="P:regulation of circadian rhythm"/>
    <property type="evidence" value="ECO:0000250"/>
    <property type="project" value="UniProtKB"/>
</dbReference>
<dbReference type="GO" id="GO:0006355">
    <property type="term" value="P:regulation of DNA-templated transcription"/>
    <property type="evidence" value="ECO:0000314"/>
    <property type="project" value="RGD"/>
</dbReference>
<dbReference type="GO" id="GO:0019217">
    <property type="term" value="P:regulation of fatty acid metabolic process"/>
    <property type="evidence" value="ECO:0000266"/>
    <property type="project" value="RGD"/>
</dbReference>
<dbReference type="GO" id="GO:0010468">
    <property type="term" value="P:regulation of gene expression"/>
    <property type="evidence" value="ECO:0000266"/>
    <property type="project" value="RGD"/>
</dbReference>
<dbReference type="GO" id="GO:0010565">
    <property type="term" value="P:regulation of ketone metabolic process"/>
    <property type="evidence" value="ECO:0000266"/>
    <property type="project" value="RGD"/>
</dbReference>
<dbReference type="GO" id="GO:0045471">
    <property type="term" value="P:response to ethanol"/>
    <property type="evidence" value="ECO:0000270"/>
    <property type="project" value="RGD"/>
</dbReference>
<dbReference type="GO" id="GO:0001666">
    <property type="term" value="P:response to hypoxia"/>
    <property type="evidence" value="ECO:0000314"/>
    <property type="project" value="HGNC-UCL"/>
</dbReference>
<dbReference type="GO" id="GO:0032868">
    <property type="term" value="P:response to insulin"/>
    <property type="evidence" value="ECO:0000315"/>
    <property type="project" value="RGD"/>
</dbReference>
<dbReference type="GO" id="GO:0007584">
    <property type="term" value="P:response to nutrient"/>
    <property type="evidence" value="ECO:0000270"/>
    <property type="project" value="RGD"/>
</dbReference>
<dbReference type="GO" id="GO:0042060">
    <property type="term" value="P:wound healing"/>
    <property type="evidence" value="ECO:0000266"/>
    <property type="project" value="RGD"/>
</dbReference>
<dbReference type="CDD" id="cd06965">
    <property type="entry name" value="NR_DBD_Ppar"/>
    <property type="match status" value="1"/>
</dbReference>
<dbReference type="CDD" id="cd06932">
    <property type="entry name" value="NR_LBD_PPAR"/>
    <property type="match status" value="1"/>
</dbReference>
<dbReference type="FunFam" id="1.10.565.10:FF:000013">
    <property type="entry name" value="Peroxisome proliferator-activated receptor delta"/>
    <property type="match status" value="1"/>
</dbReference>
<dbReference type="FunFam" id="3.30.50.10:FF:000010">
    <property type="entry name" value="Peroxisome proliferator-activated receptor gamma"/>
    <property type="match status" value="1"/>
</dbReference>
<dbReference type="Gene3D" id="3.30.50.10">
    <property type="entry name" value="Erythroid Transcription Factor GATA-1, subunit A"/>
    <property type="match status" value="1"/>
</dbReference>
<dbReference type="Gene3D" id="1.10.565.10">
    <property type="entry name" value="Retinoid X Receptor"/>
    <property type="match status" value="1"/>
</dbReference>
<dbReference type="InterPro" id="IPR003074">
    <property type="entry name" value="1Cnucl_rcpt"/>
</dbReference>
<dbReference type="InterPro" id="IPR035500">
    <property type="entry name" value="NHR-like_dom_sf"/>
</dbReference>
<dbReference type="InterPro" id="IPR000536">
    <property type="entry name" value="Nucl_hrmn_rcpt_lig-bd"/>
</dbReference>
<dbReference type="InterPro" id="IPR050234">
    <property type="entry name" value="Nuclear_hormone_rcpt_NR1"/>
</dbReference>
<dbReference type="InterPro" id="IPR001723">
    <property type="entry name" value="Nuclear_hrmn_rcpt"/>
</dbReference>
<dbReference type="InterPro" id="IPR003076">
    <property type="entry name" value="PPAR-alpha"/>
</dbReference>
<dbReference type="InterPro" id="IPR001628">
    <property type="entry name" value="Znf_hrmn_rcpt"/>
</dbReference>
<dbReference type="InterPro" id="IPR013088">
    <property type="entry name" value="Znf_NHR/GATA"/>
</dbReference>
<dbReference type="PANTHER" id="PTHR24082">
    <property type="entry name" value="NUCLEAR HORMONE RECEPTOR"/>
    <property type="match status" value="1"/>
</dbReference>
<dbReference type="PANTHER" id="PTHR24082:SF197">
    <property type="entry name" value="PEROXISOME PROLIFERATOR-ACTIVATED RECEPTOR ALPHA"/>
    <property type="match status" value="1"/>
</dbReference>
<dbReference type="Pfam" id="PF00104">
    <property type="entry name" value="Hormone_recep"/>
    <property type="match status" value="1"/>
</dbReference>
<dbReference type="Pfam" id="PF00105">
    <property type="entry name" value="zf-C4"/>
    <property type="match status" value="1"/>
</dbReference>
<dbReference type="PRINTS" id="PR01288">
    <property type="entry name" value="PROXISOMEPAR"/>
</dbReference>
<dbReference type="PRINTS" id="PR01289">
    <property type="entry name" value="PROXISOMPAAR"/>
</dbReference>
<dbReference type="PRINTS" id="PR00398">
    <property type="entry name" value="STRDHORMONER"/>
</dbReference>
<dbReference type="PRINTS" id="PR00047">
    <property type="entry name" value="STROIDFINGER"/>
</dbReference>
<dbReference type="SMART" id="SM00430">
    <property type="entry name" value="HOLI"/>
    <property type="match status" value="1"/>
</dbReference>
<dbReference type="SMART" id="SM00399">
    <property type="entry name" value="ZnF_C4"/>
    <property type="match status" value="1"/>
</dbReference>
<dbReference type="SUPFAM" id="SSF57716">
    <property type="entry name" value="Glucocorticoid receptor-like (DNA-binding domain)"/>
    <property type="match status" value="1"/>
</dbReference>
<dbReference type="SUPFAM" id="SSF48508">
    <property type="entry name" value="Nuclear receptor ligand-binding domain"/>
    <property type="match status" value="1"/>
</dbReference>
<dbReference type="PROSITE" id="PS51843">
    <property type="entry name" value="NR_LBD"/>
    <property type="match status" value="1"/>
</dbReference>
<dbReference type="PROSITE" id="PS00031">
    <property type="entry name" value="NUCLEAR_REC_DBD_1"/>
    <property type="match status" value="1"/>
</dbReference>
<dbReference type="PROSITE" id="PS51030">
    <property type="entry name" value="NUCLEAR_REC_DBD_2"/>
    <property type="match status" value="1"/>
</dbReference>